<proteinExistence type="inferred from homology"/>
<dbReference type="EC" id="3.1.21.-" evidence="3"/>
<dbReference type="EC" id="3.6.4.12" evidence="3"/>
<dbReference type="EMBL" id="M10824">
    <property type="protein sequence ID" value="AAA47160.1"/>
    <property type="molecule type" value="Genomic_DNA"/>
</dbReference>
<dbReference type="PIR" id="A03697">
    <property type="entry name" value="UYPV1F"/>
</dbReference>
<dbReference type="SMR" id="P06431"/>
<dbReference type="GO" id="GO:0042025">
    <property type="term" value="C:host cell nucleus"/>
    <property type="evidence" value="ECO:0007669"/>
    <property type="project" value="UniProtKB-SubCell"/>
</dbReference>
<dbReference type="GO" id="GO:0005524">
    <property type="term" value="F:ATP binding"/>
    <property type="evidence" value="ECO:0007669"/>
    <property type="project" value="UniProtKB-KW"/>
</dbReference>
<dbReference type="GO" id="GO:0016887">
    <property type="term" value="F:ATP hydrolysis activity"/>
    <property type="evidence" value="ECO:0007669"/>
    <property type="project" value="RHEA"/>
</dbReference>
<dbReference type="GO" id="GO:0003677">
    <property type="term" value="F:DNA binding"/>
    <property type="evidence" value="ECO:0007669"/>
    <property type="project" value="UniProtKB-KW"/>
</dbReference>
<dbReference type="GO" id="GO:0004519">
    <property type="term" value="F:endonuclease activity"/>
    <property type="evidence" value="ECO:0007669"/>
    <property type="project" value="UniProtKB-KW"/>
</dbReference>
<dbReference type="GO" id="GO:0004386">
    <property type="term" value="F:helicase activity"/>
    <property type="evidence" value="ECO:0007669"/>
    <property type="project" value="UniProtKB-KW"/>
</dbReference>
<dbReference type="GO" id="GO:0046872">
    <property type="term" value="F:metal ion binding"/>
    <property type="evidence" value="ECO:0007669"/>
    <property type="project" value="UniProtKB-KW"/>
</dbReference>
<dbReference type="GO" id="GO:0006260">
    <property type="term" value="P:DNA replication"/>
    <property type="evidence" value="ECO:0007669"/>
    <property type="project" value="UniProtKB-KW"/>
</dbReference>
<dbReference type="GO" id="GO:0039592">
    <property type="term" value="P:symbiont-mediated arrest of host cell cycle during G2/M transition"/>
    <property type="evidence" value="ECO:0007669"/>
    <property type="project" value="UniProtKB-KW"/>
</dbReference>
<dbReference type="GO" id="GO:0052150">
    <property type="term" value="P:symbiont-mediated perturbation of host apoptosis"/>
    <property type="evidence" value="ECO:0007669"/>
    <property type="project" value="UniProtKB-KW"/>
</dbReference>
<dbReference type="GO" id="GO:0039645">
    <property type="term" value="P:symbiont-mediated perturbation of host cell cycle G1/S transition checkpoint"/>
    <property type="evidence" value="ECO:0007669"/>
    <property type="project" value="UniProtKB-KW"/>
</dbReference>
<dbReference type="GO" id="GO:0039693">
    <property type="term" value="P:viral DNA genome replication"/>
    <property type="evidence" value="ECO:0007669"/>
    <property type="project" value="UniProtKB-KW"/>
</dbReference>
<dbReference type="Gene3D" id="3.40.50.300">
    <property type="entry name" value="P-loop containing nucleotide triphosphate hydrolases"/>
    <property type="match status" value="1"/>
</dbReference>
<dbReference type="InterPro" id="IPR014015">
    <property type="entry name" value="Helicase_SF3_DNA-vir"/>
</dbReference>
<dbReference type="InterPro" id="IPR027417">
    <property type="entry name" value="P-loop_NTPase"/>
</dbReference>
<dbReference type="InterPro" id="IPR021972">
    <property type="entry name" value="Parvovirus_NS1_C"/>
</dbReference>
<dbReference type="InterPro" id="IPR001257">
    <property type="entry name" value="Parvovirus_NS1_helicase"/>
</dbReference>
<dbReference type="Pfam" id="PF12117">
    <property type="entry name" value="NS1_C"/>
    <property type="match status" value="1"/>
</dbReference>
<dbReference type="Pfam" id="PF01057">
    <property type="entry name" value="Parvo_NS1"/>
    <property type="match status" value="1"/>
</dbReference>
<dbReference type="SUPFAM" id="SSF52540">
    <property type="entry name" value="P-loop containing nucleoside triphosphate hydrolases"/>
    <property type="match status" value="1"/>
</dbReference>
<dbReference type="PROSITE" id="PS51206">
    <property type="entry name" value="SF3_HELICASE_1"/>
    <property type="match status" value="1"/>
</dbReference>
<name>NS1_FPV</name>
<gene>
    <name type="primary">NS1</name>
</gene>
<organismHost>
    <name type="scientific">Felidae</name>
    <name type="common">cat family</name>
    <dbReference type="NCBI Taxonomy" id="9681"/>
</organismHost>
<organismHost>
    <name type="scientific">Nasua nasua</name>
    <name type="common">Ring-tailed coati</name>
    <dbReference type="NCBI Taxonomy" id="9651"/>
</organismHost>
<organismHost>
    <name type="scientific">Procyon lotor</name>
    <name type="common">Raccoon</name>
    <dbReference type="NCBI Taxonomy" id="9654"/>
</organismHost>
<evidence type="ECO:0000250" key="1">
    <source>
        <dbReference type="UniProtKB" id="D0EZM8"/>
    </source>
</evidence>
<evidence type="ECO:0000250" key="2">
    <source>
        <dbReference type="UniProtKB" id="P03134"/>
    </source>
</evidence>
<evidence type="ECO:0000250" key="3">
    <source>
        <dbReference type="UniProtKB" id="Q9PZT1"/>
    </source>
</evidence>
<evidence type="ECO:0000255" key="4">
    <source>
        <dbReference type="PROSITE-ProRule" id="PRU00551"/>
    </source>
</evidence>
<evidence type="ECO:0000305" key="5"/>
<accession>P06431</accession>
<feature type="chain" id="PRO_0000222462" description="Initiator protein NS1">
    <location>
        <begin position="1" status="less than"/>
        <end position="392"/>
    </location>
</feature>
<feature type="domain" description="SF3 helicase" evidence="4">
    <location>
        <begin position="91"/>
        <end position="253"/>
    </location>
</feature>
<feature type="binding site" evidence="4">
    <location>
        <begin position="124"/>
        <end position="131"/>
    </location>
    <ligand>
        <name>ATP</name>
        <dbReference type="ChEBI" id="CHEBI:30616"/>
    </ligand>
</feature>
<feature type="non-terminal residue">
    <location>
        <position position="1"/>
    </location>
</feature>
<protein>
    <recommendedName>
        <fullName evidence="2">Initiator protein NS1</fullName>
        <shortName>NS1</shortName>
        <ecNumber evidence="3">3.1.21.-</ecNumber>
        <ecNumber evidence="3">3.6.4.12</ecNumber>
    </recommendedName>
    <alternativeName>
        <fullName>NCVP1</fullName>
    </alternativeName>
    <alternativeName>
        <fullName>Non-capsid protein NS-1</fullName>
    </alternativeName>
    <alternativeName>
        <fullName>Non-structural protein 1</fullName>
    </alternativeName>
    <alternativeName>
        <fullName>Non-structural protein NS1</fullName>
    </alternativeName>
</protein>
<organism>
    <name type="scientific">Feline panleukopenia virus</name>
    <name type="common">FPV</name>
    <dbReference type="NCBI Taxonomy" id="10786"/>
    <lineage>
        <taxon>Viruses</taxon>
        <taxon>Monodnaviria</taxon>
        <taxon>Shotokuvirae</taxon>
        <taxon>Cossaviricota</taxon>
        <taxon>Quintoviricetes</taxon>
        <taxon>Piccovirales</taxon>
        <taxon>Parvoviridae</taxon>
        <taxon>Parvovirinae</taxon>
        <taxon>Protoparvovirus</taxon>
        <taxon>Protoparvovirus carnivoran1</taxon>
    </lineage>
</organism>
<keyword id="KW-0067">ATP-binding</keyword>
<keyword id="KW-0190">Covalent protein-DNA linkage</keyword>
<keyword id="KW-0235">DNA replication</keyword>
<keyword id="KW-0238">DNA-binding</keyword>
<keyword id="KW-0255">Endonuclease</keyword>
<keyword id="KW-1078">G1/S host cell cycle checkpoint dysregulation by virus</keyword>
<keyword id="KW-0347">Helicase</keyword>
<keyword id="KW-1079">Host G2/M cell cycle arrest by virus</keyword>
<keyword id="KW-1048">Host nucleus</keyword>
<keyword id="KW-0945">Host-virus interaction</keyword>
<keyword id="KW-0378">Hydrolase</keyword>
<keyword id="KW-0460">Magnesium</keyword>
<keyword id="KW-0479">Metal-binding</keyword>
<keyword id="KW-1119">Modulation of host cell apoptosis by virus</keyword>
<keyword id="KW-1121">Modulation of host cell cycle by virus</keyword>
<keyword id="KW-0540">Nuclease</keyword>
<keyword id="KW-0547">Nucleotide-binding</keyword>
<keyword id="KW-0804">Transcription</keyword>
<keyword id="KW-0805">Transcription regulation</keyword>
<keyword id="KW-1194">Viral DNA replication</keyword>
<keyword id="KW-0231">Viral genome packaging</keyword>
<keyword id="KW-1188">Viral release from host cell</keyword>
<comment type="function">
    <text evidence="2">Multifunctional protein which displays endonuclease and helicase activities required for initiating and directing viral DNA replication. Also plays a role in viral packaging and transactivation of several promoters. Binds site-specifically to 2-3 approximate tandem copies within the origins of replication (Ori), unwinds this hairpin region and nicks one DNA strand thereby initiating the rolling circle replication (RCR). Cooperatively binds Ori with host PIF and probably other host factors, which activate the nickase function of NS1. Becomes covalently attached to the 5' end of the nick and provides a 3'OH for priming DNA synthesis. The helicase activity unwinds DNA in a 3'-5' direction on the longer strand. Inhibits the host cell cycle during the G1/S transition, the S-phase, and the G2/M transition. These arrests may provide essential cellular factors for viral DNA replication. Promotes apoptosis in host cell.</text>
</comment>
<comment type="catalytic activity">
    <reaction evidence="2">
        <text>ATP + H2O = ADP + phosphate + H(+)</text>
        <dbReference type="Rhea" id="RHEA:13065"/>
        <dbReference type="ChEBI" id="CHEBI:15377"/>
        <dbReference type="ChEBI" id="CHEBI:15378"/>
        <dbReference type="ChEBI" id="CHEBI:30616"/>
        <dbReference type="ChEBI" id="CHEBI:43474"/>
        <dbReference type="ChEBI" id="CHEBI:456216"/>
        <dbReference type="EC" id="3.6.4.12"/>
    </reaction>
</comment>
<comment type="cofactor">
    <cofactor evidence="2">
        <name>Mg(2+)</name>
        <dbReference type="ChEBI" id="CHEBI:18420"/>
    </cofactor>
    <text evidence="2">The endonuclease active site can probably bind other divalent cations.</text>
</comment>
<comment type="subunit">
    <text evidence="3">Homooligomer; when bound to DNA.</text>
</comment>
<comment type="subcellular location">
    <subcellularLocation>
        <location evidence="1">Host nucleus</location>
    </subcellularLocation>
</comment>
<comment type="domain">
    <text evidence="2 3">In the N-terminus, the endonuclease region is involved in binding to the origin of replication. In the middle, there are the ATPase and helicase activities (By similarity). The C-terminus probably contains a transactivation domain (By similarity).</text>
</comment>
<comment type="PTM">
    <text evidence="2">Phosphorylated.</text>
</comment>
<comment type="similarity">
    <text evidence="5">Belongs to the parvoviruses initiator protein NS1 family.</text>
</comment>
<reference key="1">
    <citation type="journal article" date="1985" name="J. Virol.">
        <title>Cloning and sequence of DNA encoding structural proteins of the autonomous parvovirus feline panleukopenia virus.</title>
        <authorList>
            <person name="Carlson J."/>
            <person name="Rushlow K."/>
            <person name="Maxwell I."/>
            <person name="Maxwell F."/>
            <person name="Winston S."/>
            <person name="Hahn W."/>
        </authorList>
    </citation>
    <scope>NUCLEOTIDE SEQUENCE [GENOMIC DNA]</scope>
</reference>
<sequence>IQTKKEVSIKCTLRDLVSKRVTSPEDWMMLQPDSYIEMMAQPGGENLLKNTLEICTLTLARTKTAFELILEKANNTKLTNFDLANSRTCQIFRMHGWNWIKVCHAIACVLNRQGGKRNTVLFHGPASTGKSIIAQAIAQAVGNVGCYNAANVNFPFNDCTNKNLIWIEEAGNFGQQVNQFKAICSGQTIRIDQKGKGSKQIEPTPVIMTTNENITIVRIGCEERPEHTQPIRDRMLNIKLVCKLPGDFGLVDKEEWPLICAWLVKHGYESTMANYTHHWGKVPEWDENWAEPKIQEGVNSPGCKDLETQAASNPQSQDHVLTPLTPDVVDLALEPWSTPDTPIAETANQQSNQLGVTHKDVQASPTWSEIEADLRAIFTSEQLEEDFRDDLD</sequence>